<dbReference type="EMBL" id="CP001102">
    <property type="protein sequence ID" value="ACE06656.1"/>
    <property type="molecule type" value="Genomic_DNA"/>
</dbReference>
<dbReference type="RefSeq" id="WP_012473400.1">
    <property type="nucleotide sequence ID" value="NC_010830.1"/>
</dbReference>
<dbReference type="SMR" id="B3ETV4"/>
<dbReference type="STRING" id="452471.Aasi_1351"/>
<dbReference type="KEGG" id="aas:Aasi_1351"/>
<dbReference type="eggNOG" id="COG0233">
    <property type="taxonomic scope" value="Bacteria"/>
</dbReference>
<dbReference type="HOGENOM" id="CLU_073981_2_0_10"/>
<dbReference type="OrthoDB" id="9804006at2"/>
<dbReference type="Proteomes" id="UP000001227">
    <property type="component" value="Chromosome"/>
</dbReference>
<dbReference type="GO" id="GO:0005737">
    <property type="term" value="C:cytoplasm"/>
    <property type="evidence" value="ECO:0007669"/>
    <property type="project" value="UniProtKB-SubCell"/>
</dbReference>
<dbReference type="GO" id="GO:0043023">
    <property type="term" value="F:ribosomal large subunit binding"/>
    <property type="evidence" value="ECO:0007669"/>
    <property type="project" value="TreeGrafter"/>
</dbReference>
<dbReference type="GO" id="GO:0006415">
    <property type="term" value="P:translational termination"/>
    <property type="evidence" value="ECO:0007669"/>
    <property type="project" value="UniProtKB-UniRule"/>
</dbReference>
<dbReference type="CDD" id="cd00520">
    <property type="entry name" value="RRF"/>
    <property type="match status" value="1"/>
</dbReference>
<dbReference type="FunFam" id="1.10.132.20:FF:000001">
    <property type="entry name" value="Ribosome-recycling factor"/>
    <property type="match status" value="1"/>
</dbReference>
<dbReference type="FunFam" id="3.30.1360.40:FF:000001">
    <property type="entry name" value="Ribosome-recycling factor"/>
    <property type="match status" value="1"/>
</dbReference>
<dbReference type="Gene3D" id="3.30.1360.40">
    <property type="match status" value="1"/>
</dbReference>
<dbReference type="Gene3D" id="1.10.132.20">
    <property type="entry name" value="Ribosome-recycling factor"/>
    <property type="match status" value="1"/>
</dbReference>
<dbReference type="HAMAP" id="MF_00040">
    <property type="entry name" value="RRF"/>
    <property type="match status" value="1"/>
</dbReference>
<dbReference type="InterPro" id="IPR002661">
    <property type="entry name" value="Ribosome_recyc_fac"/>
</dbReference>
<dbReference type="InterPro" id="IPR023584">
    <property type="entry name" value="Ribosome_recyc_fac_dom"/>
</dbReference>
<dbReference type="InterPro" id="IPR036191">
    <property type="entry name" value="RRF_sf"/>
</dbReference>
<dbReference type="NCBIfam" id="TIGR00496">
    <property type="entry name" value="frr"/>
    <property type="match status" value="1"/>
</dbReference>
<dbReference type="PANTHER" id="PTHR20982:SF3">
    <property type="entry name" value="MITOCHONDRIAL RIBOSOME RECYCLING FACTOR PSEUDO 1"/>
    <property type="match status" value="1"/>
</dbReference>
<dbReference type="PANTHER" id="PTHR20982">
    <property type="entry name" value="RIBOSOME RECYCLING FACTOR"/>
    <property type="match status" value="1"/>
</dbReference>
<dbReference type="Pfam" id="PF01765">
    <property type="entry name" value="RRF"/>
    <property type="match status" value="1"/>
</dbReference>
<dbReference type="SUPFAM" id="SSF55194">
    <property type="entry name" value="Ribosome recycling factor, RRF"/>
    <property type="match status" value="1"/>
</dbReference>
<name>RRF_AMOA5</name>
<reference key="1">
    <citation type="journal article" date="2010" name="J. Bacteriol.">
        <title>The genome of the amoeba symbiont 'Candidatus Amoebophilus asiaticus' reveals common mechanisms for host cell interaction among amoeba-associated bacteria.</title>
        <authorList>
            <person name="Schmitz-Esser S."/>
            <person name="Tischler P."/>
            <person name="Arnold R."/>
            <person name="Montanaro J."/>
            <person name="Wagner M."/>
            <person name="Rattei T."/>
            <person name="Horn M."/>
        </authorList>
    </citation>
    <scope>NUCLEOTIDE SEQUENCE [LARGE SCALE GENOMIC DNA]</scope>
    <source>
        <strain>5a2</strain>
    </source>
</reference>
<sequence>MDEIQKQLDKSDQLMQKACTHTQIEFSKIRAGRAMPDMLDGISILYYNAMTPLNQVAAITTPDARTLVIKPWERKCIQEIEKAIVNSKLGLNPQNDGEVVRIIVPPLTEERRKDLVKQAKNEAEKGKISIRNIRKDIKETFKHLQKDGASEDTIKRAEEKLQNLTDKHIHNIDNLLTHKEAEILEV</sequence>
<protein>
    <recommendedName>
        <fullName evidence="1">Ribosome-recycling factor</fullName>
        <shortName evidence="1">RRF</shortName>
    </recommendedName>
    <alternativeName>
        <fullName evidence="1">Ribosome-releasing factor</fullName>
    </alternativeName>
</protein>
<accession>B3ETV4</accession>
<comment type="function">
    <text evidence="1">Responsible for the release of ribosomes from messenger RNA at the termination of protein biosynthesis. May increase the efficiency of translation by recycling ribosomes from one round of translation to another.</text>
</comment>
<comment type="subcellular location">
    <subcellularLocation>
        <location evidence="1">Cytoplasm</location>
    </subcellularLocation>
</comment>
<comment type="similarity">
    <text evidence="1">Belongs to the RRF family.</text>
</comment>
<feature type="chain" id="PRO_1000090705" description="Ribosome-recycling factor">
    <location>
        <begin position="1"/>
        <end position="186"/>
    </location>
</feature>
<gene>
    <name evidence="1" type="primary">frr</name>
    <name type="ordered locus">Aasi_1351</name>
</gene>
<keyword id="KW-0963">Cytoplasm</keyword>
<keyword id="KW-0648">Protein biosynthesis</keyword>
<keyword id="KW-1185">Reference proteome</keyword>
<evidence type="ECO:0000255" key="1">
    <source>
        <dbReference type="HAMAP-Rule" id="MF_00040"/>
    </source>
</evidence>
<proteinExistence type="inferred from homology"/>
<organism>
    <name type="scientific">Amoebophilus asiaticus (strain 5a2)</name>
    <dbReference type="NCBI Taxonomy" id="452471"/>
    <lineage>
        <taxon>Bacteria</taxon>
        <taxon>Pseudomonadati</taxon>
        <taxon>Bacteroidota</taxon>
        <taxon>Cytophagia</taxon>
        <taxon>Cytophagales</taxon>
        <taxon>Amoebophilaceae</taxon>
        <taxon>Candidatus Amoebophilus</taxon>
    </lineage>
</organism>